<comment type="similarity">
    <text evidence="1">Belongs to the Smg family.</text>
</comment>
<evidence type="ECO:0000255" key="1">
    <source>
        <dbReference type="HAMAP-Rule" id="MF_00598"/>
    </source>
</evidence>
<sequence length="157" mass="18510">MFDVLMYLFETYIHTEAELRVDQDKLEQDLTDAGFEREDIYNALLWLEKLADYQEGLAEPMQLASDPLSMRIYTPEECERLDASCRGFLLFLEQIQVLNLETREMVIERVLALDNAEFELDDLKWVILMVLFNIPGCENAYQQMEELLFEVNEGMLH</sequence>
<feature type="chain" id="PRO_1000061241" description="Protein Smg">
    <location>
        <begin position="1"/>
        <end position="157"/>
    </location>
</feature>
<name>SMG_ECOHS</name>
<gene>
    <name evidence="1" type="primary">smg</name>
    <name type="ordered locus">EcHS_A3478</name>
</gene>
<dbReference type="EMBL" id="CP000802">
    <property type="protein sequence ID" value="ABV07693.1"/>
    <property type="molecule type" value="Genomic_DNA"/>
</dbReference>
<dbReference type="RefSeq" id="WP_000460680.1">
    <property type="nucleotide sequence ID" value="NC_009800.1"/>
</dbReference>
<dbReference type="SMR" id="A8A589"/>
<dbReference type="GeneID" id="93778703"/>
<dbReference type="KEGG" id="ecx:EcHS_A3478"/>
<dbReference type="HOGENOM" id="CLU_133242_0_0_6"/>
<dbReference type="HAMAP" id="MF_00598">
    <property type="entry name" value="Smg"/>
    <property type="match status" value="1"/>
</dbReference>
<dbReference type="InterPro" id="IPR007456">
    <property type="entry name" value="Smg"/>
</dbReference>
<dbReference type="NCBIfam" id="NF002897">
    <property type="entry name" value="PRK03430.1"/>
    <property type="match status" value="1"/>
</dbReference>
<dbReference type="PANTHER" id="PTHR38692">
    <property type="entry name" value="PROTEIN SMG"/>
    <property type="match status" value="1"/>
</dbReference>
<dbReference type="PANTHER" id="PTHR38692:SF1">
    <property type="entry name" value="PROTEIN SMG"/>
    <property type="match status" value="1"/>
</dbReference>
<dbReference type="Pfam" id="PF04361">
    <property type="entry name" value="DUF494"/>
    <property type="match status" value="1"/>
</dbReference>
<accession>A8A589</accession>
<proteinExistence type="inferred from homology"/>
<reference key="1">
    <citation type="journal article" date="2008" name="J. Bacteriol.">
        <title>The pangenome structure of Escherichia coli: comparative genomic analysis of E. coli commensal and pathogenic isolates.</title>
        <authorList>
            <person name="Rasko D.A."/>
            <person name="Rosovitz M.J."/>
            <person name="Myers G.S.A."/>
            <person name="Mongodin E.F."/>
            <person name="Fricke W.F."/>
            <person name="Gajer P."/>
            <person name="Crabtree J."/>
            <person name="Sebaihia M."/>
            <person name="Thomson N.R."/>
            <person name="Chaudhuri R."/>
            <person name="Henderson I.R."/>
            <person name="Sperandio V."/>
            <person name="Ravel J."/>
        </authorList>
    </citation>
    <scope>NUCLEOTIDE SEQUENCE [LARGE SCALE GENOMIC DNA]</scope>
    <source>
        <strain>HS</strain>
    </source>
</reference>
<protein>
    <recommendedName>
        <fullName evidence="1">Protein Smg</fullName>
    </recommendedName>
</protein>
<organism>
    <name type="scientific">Escherichia coli O9:H4 (strain HS)</name>
    <dbReference type="NCBI Taxonomy" id="331112"/>
    <lineage>
        <taxon>Bacteria</taxon>
        <taxon>Pseudomonadati</taxon>
        <taxon>Pseudomonadota</taxon>
        <taxon>Gammaproteobacteria</taxon>
        <taxon>Enterobacterales</taxon>
        <taxon>Enterobacteriaceae</taxon>
        <taxon>Escherichia</taxon>
    </lineage>
</organism>